<keyword id="KW-0002">3D-structure</keyword>
<keyword id="KW-0007">Acetylation</keyword>
<keyword id="KW-0963">Cytoplasm</keyword>
<keyword id="KW-0256">Endoplasmic reticulum</keyword>
<keyword id="KW-1017">Isopeptide bond</keyword>
<keyword id="KW-0597">Phosphoprotein</keyword>
<keyword id="KW-1185">Reference proteome</keyword>
<keyword id="KW-0687">Ribonucleoprotein</keyword>
<keyword id="KW-0689">Ribosomal protein</keyword>
<keyword id="KW-0832">Ubl conjugation</keyword>
<comment type="function">
    <text evidence="4">Component of the large ribosomal subunit (PubMed:24930395). The ribosome is a large ribonucleoprotein complex responsible for the synthesis of proteins in the cell (PubMed:24930395).</text>
</comment>
<comment type="subunit">
    <text evidence="1 4">Component of the large ribosomal subunit (PubMed:24930395). May bind IPO9 with low affinity (By similarity).</text>
</comment>
<comment type="subcellular location">
    <subcellularLocation>
        <location evidence="2">Cytoplasm</location>
        <location evidence="2">Cytosol</location>
    </subcellularLocation>
    <subcellularLocation>
        <location evidence="4">Cytoplasm</location>
    </subcellularLocation>
    <subcellularLocation>
        <location evidence="4">Rough endoplasmic reticulum</location>
    </subcellularLocation>
    <text evidence="2 4">Detected on cytosolic polysomes (By similarity). Detected in ribosomes that are associated with the rough endoplasmic reticulum (PubMed:24930395).</text>
</comment>
<comment type="similarity">
    <text evidence="5">Belongs to the eukaryotic ribosomal protein eL6 family.</text>
</comment>
<accession>Q2YGT9</accession>
<name>RL6_PIG</name>
<proteinExistence type="evidence at protein level"/>
<dbReference type="EMBL" id="AY735452">
    <property type="protein sequence ID" value="AAV85770.1"/>
    <property type="molecule type" value="mRNA"/>
</dbReference>
<dbReference type="RefSeq" id="NP_001038007.1">
    <property type="nucleotide sequence ID" value="NM_001044542.1"/>
</dbReference>
<dbReference type="PDB" id="3J7O">
    <property type="method" value="EM"/>
    <property type="resolution" value="3.40 A"/>
    <property type="chains" value="E=38-284"/>
</dbReference>
<dbReference type="PDB" id="3J7P">
    <property type="method" value="EM"/>
    <property type="resolution" value="3.50 A"/>
    <property type="chains" value="E=38-284"/>
</dbReference>
<dbReference type="PDB" id="3J7Q">
    <property type="method" value="EM"/>
    <property type="resolution" value="3.50 A"/>
    <property type="chains" value="E=38-284"/>
</dbReference>
<dbReference type="PDB" id="3J7R">
    <property type="method" value="EM"/>
    <property type="resolution" value="3.90 A"/>
    <property type="chains" value="E=38-284"/>
</dbReference>
<dbReference type="PDBsum" id="3J7O"/>
<dbReference type="PDBsum" id="3J7P"/>
<dbReference type="PDBsum" id="3J7Q"/>
<dbReference type="PDBsum" id="3J7R"/>
<dbReference type="SMR" id="Q2YGT9"/>
<dbReference type="FunCoup" id="Q2YGT9">
    <property type="interactions" value="2451"/>
</dbReference>
<dbReference type="STRING" id="9823.ENSSSCP00000053434"/>
<dbReference type="GlyGen" id="Q2YGT9">
    <property type="glycosylation" value="1 site"/>
</dbReference>
<dbReference type="PaxDb" id="9823-ENSSSCP00000020107"/>
<dbReference type="PeptideAtlas" id="Q2YGT9"/>
<dbReference type="Ensembl" id="ENSSSCT00000053256.3">
    <property type="protein sequence ID" value="ENSSSCP00000038627.3"/>
    <property type="gene ID" value="ENSSSCG00000039130.3"/>
</dbReference>
<dbReference type="Ensembl" id="ENSSSCT00040065197.1">
    <property type="protein sequence ID" value="ENSSSCP00040027596.1"/>
    <property type="gene ID" value="ENSSSCG00040048288.1"/>
</dbReference>
<dbReference type="Ensembl" id="ENSSSCT00045019331.1">
    <property type="protein sequence ID" value="ENSSSCP00045013258.1"/>
    <property type="gene ID" value="ENSSSCG00045011389.1"/>
</dbReference>
<dbReference type="Ensembl" id="ENSSSCT00050052859.1">
    <property type="protein sequence ID" value="ENSSSCP00050022195.1"/>
    <property type="gene ID" value="ENSSSCG00050039189.1"/>
</dbReference>
<dbReference type="Ensembl" id="ENSSSCT00070016991.1">
    <property type="protein sequence ID" value="ENSSSCP00070014063.1"/>
    <property type="gene ID" value="ENSSSCG00070008766.1"/>
</dbReference>
<dbReference type="Ensembl" id="ENSSSCT00070016998.1">
    <property type="protein sequence ID" value="ENSSSCP00070014069.1"/>
    <property type="gene ID" value="ENSSSCG00070008766.1"/>
</dbReference>
<dbReference type="Ensembl" id="ENSSSCT00085045657">
    <property type="protein sequence ID" value="ENSSSCP00085031867"/>
    <property type="gene ID" value="ENSSSCG00085023775"/>
</dbReference>
<dbReference type="Ensembl" id="ENSSSCT00105056619">
    <property type="protein sequence ID" value="ENSSSCP00105039940"/>
    <property type="gene ID" value="ENSSSCG00105029778"/>
</dbReference>
<dbReference type="Ensembl" id="ENSSSCT00110075550">
    <property type="protein sequence ID" value="ENSSSCP00110053318"/>
    <property type="gene ID" value="ENSSSCG00110039578"/>
</dbReference>
<dbReference type="Ensembl" id="ENSSSCT00115007078">
    <property type="protein sequence ID" value="ENSSSCP00115006639"/>
    <property type="gene ID" value="ENSSSCG00115004115"/>
</dbReference>
<dbReference type="Ensembl" id="ENSSSCT00130027513">
    <property type="protein sequence ID" value="ENSSSCP00130018698"/>
    <property type="gene ID" value="ENSSSCG00130013897"/>
</dbReference>
<dbReference type="GeneID" id="733592"/>
<dbReference type="KEGG" id="ssc:733592"/>
<dbReference type="CTD" id="6128"/>
<dbReference type="VGNC" id="VGNC:111136">
    <property type="gene designation" value="RPL6"/>
</dbReference>
<dbReference type="eggNOG" id="KOG1694">
    <property type="taxonomic scope" value="Eukaryota"/>
</dbReference>
<dbReference type="GeneTree" id="ENSGT00390000003682"/>
<dbReference type="HOGENOM" id="CLU_066767_0_1_1"/>
<dbReference type="InParanoid" id="Q2YGT9"/>
<dbReference type="OMA" id="KWYNADD"/>
<dbReference type="OrthoDB" id="9712010at2759"/>
<dbReference type="TreeFam" id="TF300115"/>
<dbReference type="Reactome" id="R-SSC-156827">
    <property type="pathway name" value="L13a-mediated translational silencing of Ceruloplasmin expression"/>
</dbReference>
<dbReference type="Reactome" id="R-SSC-1799339">
    <property type="pathway name" value="SRP-dependent cotranslational protein targeting to membrane"/>
</dbReference>
<dbReference type="Reactome" id="R-SSC-6791226">
    <property type="pathway name" value="Major pathway of rRNA processing in the nucleolus and cytosol"/>
</dbReference>
<dbReference type="Reactome" id="R-SSC-72689">
    <property type="pathway name" value="Formation of a pool of free 40S subunits"/>
</dbReference>
<dbReference type="Reactome" id="R-SSC-72706">
    <property type="pathway name" value="GTP hydrolysis and joining of the 60S ribosomal subunit"/>
</dbReference>
<dbReference type="Reactome" id="R-SSC-975956">
    <property type="pathway name" value="Nonsense Mediated Decay (NMD) independent of the Exon Junction Complex (EJC)"/>
</dbReference>
<dbReference type="Reactome" id="R-SSC-975957">
    <property type="pathway name" value="Nonsense Mediated Decay (NMD) enhanced by the Exon Junction Complex (EJC)"/>
</dbReference>
<dbReference type="Proteomes" id="UP000008227">
    <property type="component" value="Chromosome 14"/>
</dbReference>
<dbReference type="Proteomes" id="UP000314985">
    <property type="component" value="Chromosome 14"/>
</dbReference>
<dbReference type="Proteomes" id="UP000694570">
    <property type="component" value="Unplaced"/>
</dbReference>
<dbReference type="Proteomes" id="UP000694571">
    <property type="component" value="Unplaced"/>
</dbReference>
<dbReference type="Proteomes" id="UP000694720">
    <property type="component" value="Unplaced"/>
</dbReference>
<dbReference type="Proteomes" id="UP000694722">
    <property type="component" value="Unplaced"/>
</dbReference>
<dbReference type="Proteomes" id="UP000694723">
    <property type="component" value="Unplaced"/>
</dbReference>
<dbReference type="Proteomes" id="UP000694724">
    <property type="component" value="Unplaced"/>
</dbReference>
<dbReference type="Proteomes" id="UP000694725">
    <property type="component" value="Unplaced"/>
</dbReference>
<dbReference type="Proteomes" id="UP000694726">
    <property type="component" value="Unplaced"/>
</dbReference>
<dbReference type="Proteomes" id="UP000694727">
    <property type="component" value="Unplaced"/>
</dbReference>
<dbReference type="Proteomes" id="UP000694728">
    <property type="component" value="Unplaced"/>
</dbReference>
<dbReference type="GO" id="GO:0036464">
    <property type="term" value="C:cytoplasmic ribonucleoprotein granule"/>
    <property type="evidence" value="ECO:0007669"/>
    <property type="project" value="Ensembl"/>
</dbReference>
<dbReference type="GO" id="GO:0098556">
    <property type="term" value="C:cytoplasmic side of rough endoplasmic reticulum membrane"/>
    <property type="evidence" value="ECO:0000314"/>
    <property type="project" value="UniProtKB"/>
</dbReference>
<dbReference type="GO" id="GO:0022625">
    <property type="term" value="C:cytosolic large ribosomal subunit"/>
    <property type="evidence" value="ECO:0000250"/>
    <property type="project" value="UniProtKB"/>
</dbReference>
<dbReference type="GO" id="GO:0015934">
    <property type="term" value="C:large ribosomal subunit"/>
    <property type="evidence" value="ECO:0000314"/>
    <property type="project" value="UniProtKB"/>
</dbReference>
<dbReference type="GO" id="GO:0005634">
    <property type="term" value="C:nucleus"/>
    <property type="evidence" value="ECO:0007669"/>
    <property type="project" value="Ensembl"/>
</dbReference>
<dbReference type="GO" id="GO:0014069">
    <property type="term" value="C:postsynaptic density"/>
    <property type="evidence" value="ECO:0007669"/>
    <property type="project" value="Ensembl"/>
</dbReference>
<dbReference type="GO" id="GO:0003735">
    <property type="term" value="F:structural constituent of ribosome"/>
    <property type="evidence" value="ECO:0007669"/>
    <property type="project" value="Ensembl"/>
</dbReference>
<dbReference type="GO" id="GO:0002181">
    <property type="term" value="P:cytoplasmic translation"/>
    <property type="evidence" value="ECO:0000250"/>
    <property type="project" value="UniProtKB"/>
</dbReference>
<dbReference type="CDD" id="cd13156">
    <property type="entry name" value="KOW_RPL6"/>
    <property type="match status" value="1"/>
</dbReference>
<dbReference type="FunFam" id="2.30.30.30:FF:000020">
    <property type="entry name" value="60S ribosomal protein L6"/>
    <property type="match status" value="1"/>
</dbReference>
<dbReference type="Gene3D" id="2.30.30.30">
    <property type="match status" value="1"/>
</dbReference>
<dbReference type="InterPro" id="IPR000915">
    <property type="entry name" value="60S_ribosomal_eL6"/>
</dbReference>
<dbReference type="InterPro" id="IPR014722">
    <property type="entry name" value="Rib_uL2_dom2"/>
</dbReference>
<dbReference type="InterPro" id="IPR049633">
    <property type="entry name" value="Ribosomal_eL6_CS"/>
</dbReference>
<dbReference type="InterPro" id="IPR041997">
    <property type="entry name" value="Ribosomal_eL6_KOW"/>
</dbReference>
<dbReference type="InterPro" id="IPR005568">
    <property type="entry name" value="Ribosomal_uL6_N"/>
</dbReference>
<dbReference type="InterPro" id="IPR008991">
    <property type="entry name" value="Translation_prot_SH3-like_sf"/>
</dbReference>
<dbReference type="PANTHER" id="PTHR10715">
    <property type="entry name" value="60S RIBOSOMAL PROTEIN L6"/>
    <property type="match status" value="1"/>
</dbReference>
<dbReference type="PANTHER" id="PTHR10715:SF0">
    <property type="entry name" value="LARGE RIBOSOMAL SUBUNIT PROTEIN EL6"/>
    <property type="match status" value="1"/>
</dbReference>
<dbReference type="Pfam" id="PF01159">
    <property type="entry name" value="Ribosomal_L6e"/>
    <property type="match status" value="1"/>
</dbReference>
<dbReference type="Pfam" id="PF03868">
    <property type="entry name" value="Ribosomal_L6e_N"/>
    <property type="match status" value="1"/>
</dbReference>
<dbReference type="SUPFAM" id="SSF50104">
    <property type="entry name" value="Translation proteins SH3-like domain"/>
    <property type="match status" value="1"/>
</dbReference>
<dbReference type="PROSITE" id="PS01170">
    <property type="entry name" value="RIBOSOMAL_L6E"/>
    <property type="match status" value="1"/>
</dbReference>
<gene>
    <name type="primary">RPL6</name>
</gene>
<feature type="chain" id="PRO_0000171011" description="Large ribosomal subunit protein eL6">
    <location>
        <begin position="1"/>
        <end position="284"/>
    </location>
</feature>
<feature type="region of interest" description="Disordered" evidence="3">
    <location>
        <begin position="1"/>
        <end position="42"/>
    </location>
</feature>
<feature type="compositionally biased region" description="Basic and acidic residues" evidence="3">
    <location>
        <begin position="1"/>
        <end position="25"/>
    </location>
</feature>
<feature type="compositionally biased region" description="Basic residues" evidence="3">
    <location>
        <begin position="26"/>
        <end position="40"/>
    </location>
</feature>
<feature type="modified residue" description="N6-succinyllysine" evidence="1">
    <location>
        <position position="90"/>
    </location>
</feature>
<feature type="modified residue" description="Phosphoserine" evidence="2">
    <location>
        <position position="123"/>
    </location>
</feature>
<feature type="modified residue" description="N6-succinyllysine" evidence="1">
    <location>
        <position position="203"/>
    </location>
</feature>
<feature type="modified residue" description="N6-acetyllysine" evidence="2">
    <location>
        <position position="235"/>
    </location>
</feature>
<feature type="cross-link" description="Glycyl lysine isopeptide (Lys-Gly) (interchain with G-Cter in SUMO2)" evidence="2">
    <location>
        <position position="5"/>
    </location>
</feature>
<evidence type="ECO:0000250" key="1">
    <source>
        <dbReference type="UniProtKB" id="P47911"/>
    </source>
</evidence>
<evidence type="ECO:0000250" key="2">
    <source>
        <dbReference type="UniProtKB" id="Q02878"/>
    </source>
</evidence>
<evidence type="ECO:0000256" key="3">
    <source>
        <dbReference type="SAM" id="MobiDB-lite"/>
    </source>
</evidence>
<evidence type="ECO:0000269" key="4">
    <source>
    </source>
</evidence>
<evidence type="ECO:0000305" key="5"/>
<evidence type="ECO:0007744" key="6">
    <source>
        <dbReference type="PDB" id="3J7O"/>
    </source>
</evidence>
<evidence type="ECO:0007744" key="7">
    <source>
        <dbReference type="PDB" id="3J7P"/>
    </source>
</evidence>
<reference key="1">
    <citation type="submission" date="2004-08" db="EMBL/GenBank/DDBJ databases">
        <title>Full-length cDNA, molecular characterization, and physical mapping of porcine RPL6, RPL7 and RPL10.</title>
        <authorList>
            <person name="Wang H.L."/>
            <person name="Zhu Z.M."/>
            <person name="Wu X."/>
            <person name="Wang H."/>
            <person name="Yu M."/>
            <person name="Zhao S.H."/>
            <person name="Yang S.L."/>
            <person name="Li K."/>
        </authorList>
    </citation>
    <scope>NUCLEOTIDE SEQUENCE [MRNA]</scope>
</reference>
<reference evidence="6 7" key="2">
    <citation type="journal article" date="2014" name="Cell">
        <title>Structure of the mammalian ribosome-Sec61 complex to 3.4 A resolution.</title>
        <authorList>
            <person name="Voorhees R.M."/>
            <person name="Fernandez I.S."/>
            <person name="Scheres S.H."/>
            <person name="Hegde R.S."/>
        </authorList>
    </citation>
    <scope>STRUCTURE BY ELECTRON MICROSCOPY (3.40 ANGSTROMS)</scope>
    <scope>FUNCTION</scope>
    <scope>SUBCELLULAR LOCATION</scope>
    <scope>SUBUNIT</scope>
</reference>
<protein>
    <recommendedName>
        <fullName evidence="5">Large ribosomal subunit protein eL6</fullName>
    </recommendedName>
    <alternativeName>
        <fullName>60S ribosomal protein L6</fullName>
    </alternativeName>
</protein>
<sequence length="284" mass="32190">MAGEKAEKPGTKEKKPEAKKADAGGKVKKAKKVKKGKPHCSRNPVLVRGIGRYSRSAMYSRKALYKRKYSAAKSKVEKKKKVRVLATVTKPVGGDKNGGTRVVKLRKMPRYYPTEDVPRKLLSHGKKPFSKHVRKLRASITPGTILIILTGRHRGKRVIFLKQLSSGLLLVTGPLSLNRVPLRRTHQKFVIATSTKIDISGVKIPEHLTDAYFKKKKLRKPRHQEGEIFDTEKEKYEISEQRKVDQKAVDSQILRRIKAVPQLQGYLRSVFALTNGIYPHKLVF</sequence>
<organism>
    <name type="scientific">Sus scrofa</name>
    <name type="common">Pig</name>
    <dbReference type="NCBI Taxonomy" id="9823"/>
    <lineage>
        <taxon>Eukaryota</taxon>
        <taxon>Metazoa</taxon>
        <taxon>Chordata</taxon>
        <taxon>Craniata</taxon>
        <taxon>Vertebrata</taxon>
        <taxon>Euteleostomi</taxon>
        <taxon>Mammalia</taxon>
        <taxon>Eutheria</taxon>
        <taxon>Laurasiatheria</taxon>
        <taxon>Artiodactyla</taxon>
        <taxon>Suina</taxon>
        <taxon>Suidae</taxon>
        <taxon>Sus</taxon>
    </lineage>
</organism>